<sequence length="1344" mass="147254">MSGQQQATSVLVFFVNGKKVTDTNPDPECTLLTYLRDKLRLCGTKLGCAEGGCGACTVMISRMDRGQHKIRHLAVNACLTPVCAMHGCAVTTVEGIGSTRTRLHPVQERLAKAHGSQCGFCTPGIVMSMYALLRNAEQPSMRDLEVAFQGNLCRCTGYRPILEGYKTFTKEFLCGMGEKCCRVNGKGCGGGDDPESVTDDTLFERSKFQPLDASQEPIFPPELQLSNAYDSESLVFSSERVTWYRPTTLQELLQLKAAHPAAKLVVGNTEVGVEVKFKHFLYPHLINPTLVAELQEVRESEESIYFGAAVSLMEIDALLRQRIEELPEAQTRLFQCTVDMLHYFAGKQIRNVACLGGNIMTGSPISDMNPVLTAAGARLEVASIVEGKISQRTVHMGTGFFTGYRRNVIEPQEVLLGIHFQKTTPDQHVVAFKQARRRDDDIAIVNAAVNVRFEPKSNVVAEISMAFGGMAPTTVLAPRTSQLMVKQPLDHQLLERVAESLCGELPLAASAPGGMIAYRRALVVSLIFKAYLAISSKLSEAGIIAGDAIPPKERSGAELFHTPTLRSAQLFERVCSDQPVCDPIGRPEVHAAALKQATGEAIYTDDIPRMDGELYLGFVLSTKPRAKITKLDASAALALEGVHAFFSHKDLTVHENEVGPVFHDEHVFAAGEVHCYGQIVGAVAADNKALAQRASRLVRVEYEDLSPVIVTIEQAIEHGSYFPDYPRYVTKGNMAEAFAQAEHTYEGSCRMGGQEHFYLETHAAVAVPRDSDELELFCSTQHPSEVQKLVAHVTSLPAHRVVCRAKRLGGGFGGKESRGISVALPVALAAYRLRRPVRCMLDRDEDMLITGTRHPFLFKYKVAFSSDGLITACDIECYNNAGWSMDLSFSVLERAMYHFENCYHIPNVRVGGWVCKTNLPSNTAFRGFGGPQGMFAGEHIIRDVARIVGRDVLDVMRLNFYRTGDTTHYNQQLEHFPIERCLDDCLTQSRYHERRAEIAKFNRENRWRKRGVAVIPTKYGIAFGVMHLNQAGALLNVYGDGSVLLSHGGVEIGQGLNTKMIQCAARALGIPSELIHISETATDKVPNTSPTAASVGSDINGMAVLDACEKLNKRLAPIKEALPQATWQEWINKAYFDRVSLSATGFYAMPGIGYHPETNPNARTYSYYTNGVGISVVEIDCLTGDHQVLSTDIVMDIGSSINPAIDIGQIEGAFMQGYGLFTLEELMYSPQGMLYSRGPGMYKLPGFADIPGEFNVSLLTGAPNPRAVYSSKAVGEPPLFIGASAFFAIKEAIAAARQEHGLTGDFPLEAPSTSARIRMACQDKFTNLLEVPEAGSFTPWNIVP</sequence>
<accession>P91711</accession>
<evidence type="ECO:0000250" key="1"/>
<evidence type="ECO:0000250" key="2">
    <source>
        <dbReference type="UniProtKB" id="P22985"/>
    </source>
</evidence>
<evidence type="ECO:0000255" key="3">
    <source>
        <dbReference type="PROSITE-ProRule" id="PRU00465"/>
    </source>
</evidence>
<evidence type="ECO:0000255" key="4">
    <source>
        <dbReference type="PROSITE-ProRule" id="PRU00718"/>
    </source>
</evidence>
<evidence type="ECO:0000305" key="5"/>
<keyword id="KW-0001">2Fe-2S</keyword>
<keyword id="KW-0274">FAD</keyword>
<keyword id="KW-0285">Flavoprotein</keyword>
<keyword id="KW-0408">Iron</keyword>
<keyword id="KW-0411">Iron-sulfur</keyword>
<keyword id="KW-0479">Metal-binding</keyword>
<keyword id="KW-0500">Molybdenum</keyword>
<keyword id="KW-0520">NAD</keyword>
<keyword id="KW-0560">Oxidoreductase</keyword>
<keyword id="KW-0576">Peroxisome</keyword>
<comment type="function">
    <text evidence="1">Key enzyme in purine degradation. Catalyzes the oxidation of hypoxanthine to xanthine. Catalyzes the oxidation of xanthine to uric acid (By similarity).</text>
</comment>
<comment type="catalytic activity">
    <reaction>
        <text>xanthine + NAD(+) + H2O = urate + NADH + H(+)</text>
        <dbReference type="Rhea" id="RHEA:16669"/>
        <dbReference type="ChEBI" id="CHEBI:15377"/>
        <dbReference type="ChEBI" id="CHEBI:15378"/>
        <dbReference type="ChEBI" id="CHEBI:17712"/>
        <dbReference type="ChEBI" id="CHEBI:17775"/>
        <dbReference type="ChEBI" id="CHEBI:57540"/>
        <dbReference type="ChEBI" id="CHEBI:57945"/>
        <dbReference type="EC" id="1.17.1.4"/>
    </reaction>
</comment>
<comment type="catalytic activity">
    <reaction>
        <text>hypoxanthine + NAD(+) + H2O = xanthine + NADH + H(+)</text>
        <dbReference type="Rhea" id="RHEA:24670"/>
        <dbReference type="ChEBI" id="CHEBI:15377"/>
        <dbReference type="ChEBI" id="CHEBI:15378"/>
        <dbReference type="ChEBI" id="CHEBI:17368"/>
        <dbReference type="ChEBI" id="CHEBI:17712"/>
        <dbReference type="ChEBI" id="CHEBI:57540"/>
        <dbReference type="ChEBI" id="CHEBI:57945"/>
        <dbReference type="EC" id="1.17.1.4"/>
    </reaction>
</comment>
<comment type="cofactor">
    <cofactor evidence="1">
        <name>FAD</name>
        <dbReference type="ChEBI" id="CHEBI:57692"/>
    </cofactor>
</comment>
<comment type="cofactor">
    <cofactor evidence="1">
        <name>Mo-molybdopterin</name>
        <dbReference type="ChEBI" id="CHEBI:71302"/>
    </cofactor>
    <text evidence="1">Binds 1 Mo-molybdopterin (Mo-MPT) cofactor per subunit.</text>
</comment>
<comment type="cofactor">
    <cofactor evidence="2">
        <name>[2Fe-2S] cluster</name>
        <dbReference type="ChEBI" id="CHEBI:190135"/>
    </cofactor>
    <text evidence="2">Binds 2 [2Fe-2S] clusters per subunit.</text>
</comment>
<comment type="subunit">
    <text evidence="1">Homodimer.</text>
</comment>
<comment type="subcellular location">
    <subcellularLocation>
        <location evidence="1">Peroxisome</location>
    </subcellularLocation>
</comment>
<comment type="similarity">
    <text evidence="5">Belongs to the xanthine dehydrogenase family.</text>
</comment>
<organism>
    <name type="scientific">Drosophila subobscura</name>
    <name type="common">Fruit fly</name>
    <dbReference type="NCBI Taxonomy" id="7241"/>
    <lineage>
        <taxon>Eukaryota</taxon>
        <taxon>Metazoa</taxon>
        <taxon>Ecdysozoa</taxon>
        <taxon>Arthropoda</taxon>
        <taxon>Hexapoda</taxon>
        <taxon>Insecta</taxon>
        <taxon>Pterygota</taxon>
        <taxon>Neoptera</taxon>
        <taxon>Endopterygota</taxon>
        <taxon>Diptera</taxon>
        <taxon>Brachycera</taxon>
        <taxon>Muscomorpha</taxon>
        <taxon>Ephydroidea</taxon>
        <taxon>Drosophilidae</taxon>
        <taxon>Drosophila</taxon>
        <taxon>Sophophora</taxon>
    </lineage>
</organism>
<name>XDH_DROSU</name>
<feature type="chain" id="PRO_0000166081" description="Xanthine dehydrogenase">
    <location>
        <begin position="1"/>
        <end position="1344"/>
    </location>
</feature>
<feature type="domain" description="2Fe-2S ferredoxin-type" evidence="3">
    <location>
        <begin position="9"/>
        <end position="96"/>
    </location>
</feature>
<feature type="domain" description="FAD-binding PCMH-type" evidence="4">
    <location>
        <begin position="236"/>
        <end position="425"/>
    </location>
</feature>
<feature type="active site" description="Proton acceptor" evidence="1">
    <location>
        <position position="1276"/>
    </location>
</feature>
<feature type="binding site" evidence="2">
    <location>
        <position position="48"/>
    </location>
    <ligand>
        <name>[2Fe-2S] cluster</name>
        <dbReference type="ChEBI" id="CHEBI:190135"/>
        <label>1</label>
    </ligand>
</feature>
<feature type="binding site" evidence="2">
    <location>
        <position position="53"/>
    </location>
    <ligand>
        <name>[2Fe-2S] cluster</name>
        <dbReference type="ChEBI" id="CHEBI:190135"/>
        <label>1</label>
    </ligand>
</feature>
<feature type="binding site" evidence="2">
    <location>
        <position position="56"/>
    </location>
    <ligand>
        <name>[2Fe-2S] cluster</name>
        <dbReference type="ChEBI" id="CHEBI:190135"/>
        <label>1</label>
    </ligand>
</feature>
<feature type="binding site" evidence="2">
    <location>
        <position position="78"/>
    </location>
    <ligand>
        <name>[2Fe-2S] cluster</name>
        <dbReference type="ChEBI" id="CHEBI:190135"/>
        <label>1</label>
    </ligand>
</feature>
<feature type="binding site" evidence="2">
    <location>
        <position position="118"/>
    </location>
    <ligand>
        <name>[2Fe-2S] cluster</name>
        <dbReference type="ChEBI" id="CHEBI:190135"/>
        <label>2</label>
    </ligand>
</feature>
<feature type="binding site" evidence="2">
    <location>
        <position position="121"/>
    </location>
    <ligand>
        <name>[2Fe-2S] cluster</name>
        <dbReference type="ChEBI" id="CHEBI:190135"/>
        <label>2</label>
    </ligand>
</feature>
<feature type="binding site" evidence="2">
    <location>
        <position position="153"/>
    </location>
    <ligand>
        <name>[2Fe-2S] cluster</name>
        <dbReference type="ChEBI" id="CHEBI:190135"/>
        <label>2</label>
    </ligand>
</feature>
<feature type="binding site" evidence="2">
    <location>
        <position position="155"/>
    </location>
    <ligand>
        <name>[2Fe-2S] cluster</name>
        <dbReference type="ChEBI" id="CHEBI:190135"/>
        <label>2</label>
    </ligand>
</feature>
<feature type="binding site" evidence="1">
    <location>
        <begin position="264"/>
        <end position="271"/>
    </location>
    <ligand>
        <name>FAD</name>
        <dbReference type="ChEBI" id="CHEBI:57692"/>
    </ligand>
</feature>
<feature type="binding site" evidence="1">
    <location>
        <position position="344"/>
    </location>
    <ligand>
        <name>FAD</name>
        <dbReference type="ChEBI" id="CHEBI:57692"/>
    </ligand>
</feature>
<feature type="binding site" evidence="1">
    <location>
        <begin position="354"/>
        <end position="358"/>
    </location>
    <ligand>
        <name>FAD</name>
        <dbReference type="ChEBI" id="CHEBI:57692"/>
    </ligand>
</feature>
<feature type="binding site" evidence="1">
    <location>
        <position position="367"/>
    </location>
    <ligand>
        <name>FAD</name>
        <dbReference type="ChEBI" id="CHEBI:57692"/>
    </ligand>
</feature>
<feature type="binding site" evidence="1">
    <location>
        <position position="415"/>
    </location>
    <ligand>
        <name>FAD</name>
        <dbReference type="ChEBI" id="CHEBI:57692"/>
    </ligand>
</feature>
<feature type="binding site" evidence="1">
    <location>
        <position position="433"/>
    </location>
    <ligand>
        <name>FAD</name>
        <dbReference type="ChEBI" id="CHEBI:57692"/>
    </ligand>
</feature>
<feature type="binding site" evidence="1">
    <location>
        <position position="781"/>
    </location>
    <ligand>
        <name>Mo-molybdopterin</name>
        <dbReference type="ChEBI" id="CHEBI:71302"/>
    </ligand>
    <ligandPart>
        <name>Mo</name>
        <dbReference type="ChEBI" id="CHEBI:28685"/>
    </ligandPart>
</feature>
<feature type="binding site" evidence="1">
    <location>
        <position position="812"/>
    </location>
    <ligand>
        <name>Mo-molybdopterin</name>
        <dbReference type="ChEBI" id="CHEBI:71302"/>
    </ligand>
    <ligandPart>
        <name>Mo</name>
        <dbReference type="ChEBI" id="CHEBI:28685"/>
    </ligandPart>
</feature>
<feature type="binding site" evidence="1">
    <location>
        <position position="816"/>
    </location>
    <ligand>
        <name>substrate</name>
    </ligand>
</feature>
<feature type="binding site" evidence="1">
    <location>
        <position position="894"/>
    </location>
    <ligand>
        <name>substrate</name>
    </ligand>
</feature>
<feature type="binding site" evidence="1">
    <location>
        <position position="926"/>
    </location>
    <ligand>
        <name>Mo-molybdopterin</name>
        <dbReference type="ChEBI" id="CHEBI:71302"/>
    </ligand>
    <ligandPart>
        <name>Mo</name>
        <dbReference type="ChEBI" id="CHEBI:28685"/>
    </ligandPart>
</feature>
<feature type="binding site" evidence="1">
    <location>
        <position position="928"/>
    </location>
    <ligand>
        <name>substrate</name>
    </ligand>
</feature>
<feature type="binding site" evidence="1">
    <location>
        <position position="1093"/>
    </location>
    <ligand>
        <name>Mo-molybdopterin</name>
        <dbReference type="ChEBI" id="CHEBI:71302"/>
    </ligand>
    <ligandPart>
        <name>Mo</name>
        <dbReference type="ChEBI" id="CHEBI:28685"/>
    </ligandPart>
</feature>
<proteinExistence type="inferred from homology"/>
<gene>
    <name type="primary">Xdh</name>
    <name type="synonym">ry</name>
</gene>
<protein>
    <recommendedName>
        <fullName>Xanthine dehydrogenase</fullName>
        <shortName>XD</shortName>
        <ecNumber>1.17.1.4</ecNumber>
    </recommendedName>
    <alternativeName>
        <fullName>Protein rosy locus</fullName>
    </alternativeName>
</protein>
<dbReference type="EC" id="1.17.1.4"/>
<dbReference type="EMBL" id="Y08237">
    <property type="protein sequence ID" value="CAA69405.1"/>
    <property type="molecule type" value="Genomic_DNA"/>
</dbReference>
<dbReference type="SMR" id="P91711"/>
<dbReference type="FlyBase" id="FBgn0013892">
    <property type="gene designation" value="Dsub\Xdh"/>
</dbReference>
<dbReference type="GO" id="GO:0005777">
    <property type="term" value="C:peroxisome"/>
    <property type="evidence" value="ECO:0007669"/>
    <property type="project" value="UniProtKB-SubCell"/>
</dbReference>
<dbReference type="GO" id="GO:0051537">
    <property type="term" value="F:2 iron, 2 sulfur cluster binding"/>
    <property type="evidence" value="ECO:0000250"/>
    <property type="project" value="UniProtKB"/>
</dbReference>
<dbReference type="GO" id="GO:0071949">
    <property type="term" value="F:FAD binding"/>
    <property type="evidence" value="ECO:0007669"/>
    <property type="project" value="InterPro"/>
</dbReference>
<dbReference type="GO" id="GO:0050660">
    <property type="term" value="F:flavin adenine dinucleotide binding"/>
    <property type="evidence" value="ECO:0000250"/>
    <property type="project" value="UniProtKB"/>
</dbReference>
<dbReference type="GO" id="GO:0005506">
    <property type="term" value="F:iron ion binding"/>
    <property type="evidence" value="ECO:0007669"/>
    <property type="project" value="InterPro"/>
</dbReference>
<dbReference type="GO" id="GO:0043546">
    <property type="term" value="F:molybdopterin cofactor binding"/>
    <property type="evidence" value="ECO:0000250"/>
    <property type="project" value="UniProtKB"/>
</dbReference>
<dbReference type="GO" id="GO:0004854">
    <property type="term" value="F:xanthine dehydrogenase activity"/>
    <property type="evidence" value="ECO:0000250"/>
    <property type="project" value="UniProtKB"/>
</dbReference>
<dbReference type="GO" id="GO:0009115">
    <property type="term" value="P:xanthine catabolic process"/>
    <property type="evidence" value="ECO:0000250"/>
    <property type="project" value="UniProtKB"/>
</dbReference>
<dbReference type="CDD" id="cd00207">
    <property type="entry name" value="fer2"/>
    <property type="match status" value="1"/>
</dbReference>
<dbReference type="FunFam" id="1.10.150.120:FF:000001">
    <property type="entry name" value="Aldehyde oxidase 1"/>
    <property type="match status" value="1"/>
</dbReference>
<dbReference type="FunFam" id="3.10.20.30:FF:000015">
    <property type="entry name" value="Aldehyde oxidase 1"/>
    <property type="match status" value="1"/>
</dbReference>
<dbReference type="FunFam" id="3.30.365.10:FF:000003">
    <property type="entry name" value="Aldehyde oxidase 1"/>
    <property type="match status" value="1"/>
</dbReference>
<dbReference type="FunFam" id="3.90.1170.50:FF:000001">
    <property type="entry name" value="Aldehyde oxidase 1"/>
    <property type="match status" value="1"/>
</dbReference>
<dbReference type="FunFam" id="3.30.365.10:FF:000001">
    <property type="entry name" value="Xanthine dehydrogenase oxidase"/>
    <property type="match status" value="1"/>
</dbReference>
<dbReference type="FunFam" id="3.30.365.10:FF:000004">
    <property type="entry name" value="Xanthine dehydrogenase oxidase"/>
    <property type="match status" value="1"/>
</dbReference>
<dbReference type="FunFam" id="3.30.390.50:FF:000001">
    <property type="entry name" value="Xanthine dehydrogenase oxidase"/>
    <property type="match status" value="1"/>
</dbReference>
<dbReference type="FunFam" id="3.30.43.10:FF:000001">
    <property type="entry name" value="Xanthine dehydrogenase/oxidase"/>
    <property type="match status" value="1"/>
</dbReference>
<dbReference type="FunFam" id="3.30.465.10:FF:000004">
    <property type="entry name" value="Xanthine dehydrogenase/oxidase"/>
    <property type="match status" value="1"/>
</dbReference>
<dbReference type="Gene3D" id="3.10.20.30">
    <property type="match status" value="1"/>
</dbReference>
<dbReference type="Gene3D" id="3.30.465.10">
    <property type="match status" value="1"/>
</dbReference>
<dbReference type="Gene3D" id="1.10.150.120">
    <property type="entry name" value="[2Fe-2S]-binding domain"/>
    <property type="match status" value="1"/>
</dbReference>
<dbReference type="Gene3D" id="3.90.1170.50">
    <property type="entry name" value="Aldehyde oxidase/xanthine dehydrogenase, a/b hammerhead"/>
    <property type="match status" value="1"/>
</dbReference>
<dbReference type="Gene3D" id="3.30.365.10">
    <property type="entry name" value="Aldehyde oxidase/xanthine dehydrogenase, molybdopterin binding domain"/>
    <property type="match status" value="4"/>
</dbReference>
<dbReference type="Gene3D" id="3.30.390.50">
    <property type="entry name" value="CO dehydrogenase flavoprotein, C-terminal domain"/>
    <property type="match status" value="1"/>
</dbReference>
<dbReference type="Gene3D" id="3.30.43.10">
    <property type="entry name" value="Uridine Diphospho-n-acetylenolpyruvylglucosamine Reductase, domain 2"/>
    <property type="match status" value="1"/>
</dbReference>
<dbReference type="InterPro" id="IPR002888">
    <property type="entry name" value="2Fe-2S-bd"/>
</dbReference>
<dbReference type="InterPro" id="IPR036884">
    <property type="entry name" value="2Fe-2S-bd_dom_sf"/>
</dbReference>
<dbReference type="InterPro" id="IPR036010">
    <property type="entry name" value="2Fe-2S_ferredoxin-like_sf"/>
</dbReference>
<dbReference type="InterPro" id="IPR001041">
    <property type="entry name" value="2Fe-2S_ferredoxin-type"/>
</dbReference>
<dbReference type="InterPro" id="IPR006058">
    <property type="entry name" value="2Fe2S_fd_BS"/>
</dbReference>
<dbReference type="InterPro" id="IPR000674">
    <property type="entry name" value="Ald_Oxase/Xan_DH_a/b"/>
</dbReference>
<dbReference type="InterPro" id="IPR036856">
    <property type="entry name" value="Ald_Oxase/Xan_DH_a/b_sf"/>
</dbReference>
<dbReference type="InterPro" id="IPR016208">
    <property type="entry name" value="Ald_Oxase/xanthine_DH-like"/>
</dbReference>
<dbReference type="InterPro" id="IPR008274">
    <property type="entry name" value="AldOxase/xan_DH_MoCoBD1"/>
</dbReference>
<dbReference type="InterPro" id="IPR046867">
    <property type="entry name" value="AldOxase/xan_DH_MoCoBD2"/>
</dbReference>
<dbReference type="InterPro" id="IPR037165">
    <property type="entry name" value="AldOxase/xan_DH_Mopterin-bd_sf"/>
</dbReference>
<dbReference type="InterPro" id="IPR012675">
    <property type="entry name" value="Beta-grasp_dom_sf"/>
</dbReference>
<dbReference type="InterPro" id="IPR005107">
    <property type="entry name" value="CO_DH_flav_C"/>
</dbReference>
<dbReference type="InterPro" id="IPR036683">
    <property type="entry name" value="CO_DH_flav_C_dom_sf"/>
</dbReference>
<dbReference type="InterPro" id="IPR016166">
    <property type="entry name" value="FAD-bd_PCMH"/>
</dbReference>
<dbReference type="InterPro" id="IPR036318">
    <property type="entry name" value="FAD-bd_PCMH-like_sf"/>
</dbReference>
<dbReference type="InterPro" id="IPR016167">
    <property type="entry name" value="FAD-bd_PCMH_sub1"/>
</dbReference>
<dbReference type="InterPro" id="IPR016169">
    <property type="entry name" value="FAD-bd_PCMH_sub2"/>
</dbReference>
<dbReference type="InterPro" id="IPR002346">
    <property type="entry name" value="Mopterin_DH_FAD-bd"/>
</dbReference>
<dbReference type="InterPro" id="IPR022407">
    <property type="entry name" value="OxRdtase_Mopterin_BS"/>
</dbReference>
<dbReference type="InterPro" id="IPR014307">
    <property type="entry name" value="Xanthine_DH_ssu"/>
</dbReference>
<dbReference type="NCBIfam" id="TIGR02963">
    <property type="entry name" value="xanthine_xdhA"/>
    <property type="match status" value="1"/>
</dbReference>
<dbReference type="PANTHER" id="PTHR45444">
    <property type="entry name" value="XANTHINE DEHYDROGENASE"/>
    <property type="match status" value="1"/>
</dbReference>
<dbReference type="PANTHER" id="PTHR45444:SF3">
    <property type="entry name" value="XANTHINE DEHYDROGENASE"/>
    <property type="match status" value="1"/>
</dbReference>
<dbReference type="Pfam" id="PF01315">
    <property type="entry name" value="Ald_Xan_dh_C"/>
    <property type="match status" value="1"/>
</dbReference>
<dbReference type="Pfam" id="PF03450">
    <property type="entry name" value="CO_deh_flav_C"/>
    <property type="match status" value="1"/>
</dbReference>
<dbReference type="Pfam" id="PF00941">
    <property type="entry name" value="FAD_binding_5"/>
    <property type="match status" value="1"/>
</dbReference>
<dbReference type="Pfam" id="PF00111">
    <property type="entry name" value="Fer2"/>
    <property type="match status" value="1"/>
</dbReference>
<dbReference type="Pfam" id="PF01799">
    <property type="entry name" value="Fer2_2"/>
    <property type="match status" value="1"/>
</dbReference>
<dbReference type="Pfam" id="PF02738">
    <property type="entry name" value="MoCoBD_1"/>
    <property type="match status" value="1"/>
</dbReference>
<dbReference type="Pfam" id="PF20256">
    <property type="entry name" value="MoCoBD_2"/>
    <property type="match status" value="1"/>
</dbReference>
<dbReference type="PIRSF" id="PIRSF000127">
    <property type="entry name" value="Xanthine_DH"/>
    <property type="match status" value="1"/>
</dbReference>
<dbReference type="SMART" id="SM01008">
    <property type="entry name" value="Ald_Xan_dh_C"/>
    <property type="match status" value="1"/>
</dbReference>
<dbReference type="SMART" id="SM01092">
    <property type="entry name" value="CO_deh_flav_C"/>
    <property type="match status" value="1"/>
</dbReference>
<dbReference type="SUPFAM" id="SSF54292">
    <property type="entry name" value="2Fe-2S ferredoxin-like"/>
    <property type="match status" value="1"/>
</dbReference>
<dbReference type="SUPFAM" id="SSF55447">
    <property type="entry name" value="CO dehydrogenase flavoprotein C-terminal domain-like"/>
    <property type="match status" value="1"/>
</dbReference>
<dbReference type="SUPFAM" id="SSF47741">
    <property type="entry name" value="CO dehydrogenase ISP C-domain like"/>
    <property type="match status" value="1"/>
</dbReference>
<dbReference type="SUPFAM" id="SSF54665">
    <property type="entry name" value="CO dehydrogenase molybdoprotein N-domain-like"/>
    <property type="match status" value="1"/>
</dbReference>
<dbReference type="SUPFAM" id="SSF56176">
    <property type="entry name" value="FAD-binding/transporter-associated domain-like"/>
    <property type="match status" value="1"/>
</dbReference>
<dbReference type="SUPFAM" id="SSF56003">
    <property type="entry name" value="Molybdenum cofactor-binding domain"/>
    <property type="match status" value="1"/>
</dbReference>
<dbReference type="PROSITE" id="PS00197">
    <property type="entry name" value="2FE2S_FER_1"/>
    <property type="match status" value="1"/>
</dbReference>
<dbReference type="PROSITE" id="PS51085">
    <property type="entry name" value="2FE2S_FER_2"/>
    <property type="match status" value="1"/>
</dbReference>
<dbReference type="PROSITE" id="PS51387">
    <property type="entry name" value="FAD_PCMH"/>
    <property type="match status" value="1"/>
</dbReference>
<dbReference type="PROSITE" id="PS00559">
    <property type="entry name" value="MOLYBDOPTERIN_EUK"/>
    <property type="match status" value="1"/>
</dbReference>
<reference key="1">
    <citation type="journal article" date="1996" name="Genetics">
        <title>Synonymous substitutions in the Xdh gene of Drosophila: heterogeneous distribution along the coding region.</title>
        <authorList>
            <person name="Comeron J.M."/>
            <person name="Aguade M."/>
        </authorList>
    </citation>
    <scope>NUCLEOTIDE SEQUENCE [GENOMIC DNA]</scope>
</reference>